<name>SODC2_DEBHN</name>
<organism>
    <name type="scientific">Debaryomyces hansenii</name>
    <name type="common">Yeast</name>
    <name type="synonym">Torulaspora hansenii</name>
    <dbReference type="NCBI Taxonomy" id="4959"/>
    <lineage>
        <taxon>Eukaryota</taxon>
        <taxon>Fungi</taxon>
        <taxon>Dikarya</taxon>
        <taxon>Ascomycota</taxon>
        <taxon>Saccharomycotina</taxon>
        <taxon>Pichiomycetes</taxon>
        <taxon>Debaryomycetaceae</taxon>
        <taxon>Debaryomyces</taxon>
    </lineage>
</organism>
<accession>P82902</accession>
<proteinExistence type="evidence at protein level"/>
<keyword id="KW-0049">Antioxidant</keyword>
<keyword id="KW-0186">Copper</keyword>
<keyword id="KW-0963">Cytoplasm</keyword>
<keyword id="KW-0903">Direct protein sequencing</keyword>
<keyword id="KW-0479">Metal-binding</keyword>
<keyword id="KW-0560">Oxidoreductase</keyword>
<keyword id="KW-0862">Zinc</keyword>
<feature type="chain" id="PRO_0000164119" description="Superoxide dismutase [Cu-Zn] 2">
    <location>
        <begin position="1" status="less than"/>
        <end position="52" status="greater than"/>
    </location>
</feature>
<feature type="binding site" evidence="2">
    <location>
        <position position="44"/>
    </location>
    <ligand>
        <name>Cu cation</name>
        <dbReference type="ChEBI" id="CHEBI:23378"/>
        <note>catalytic</note>
    </ligand>
</feature>
<feature type="non-consecutive residues" evidence="4">
    <location>
        <begin position="29"/>
        <end position="30"/>
    </location>
</feature>
<feature type="non-terminal residue">
    <location>
        <position position="1"/>
    </location>
</feature>
<feature type="non-terminal residue">
    <location>
        <position position="52"/>
    </location>
</feature>
<evidence type="ECO:0000250" key="1">
    <source>
        <dbReference type="UniProtKB" id="P00442"/>
    </source>
</evidence>
<evidence type="ECO:0000250" key="2">
    <source>
        <dbReference type="UniProtKB" id="P00445"/>
    </source>
</evidence>
<evidence type="ECO:0000250" key="3">
    <source>
        <dbReference type="UniProtKB" id="P85978"/>
    </source>
</evidence>
<evidence type="ECO:0000305" key="4"/>
<comment type="function">
    <text evidence="1">Destroys radicals which are normally produced within the cells and which are toxic to biological systems.</text>
</comment>
<comment type="catalytic activity">
    <reaction evidence="3">
        <text>2 superoxide + 2 H(+) = H2O2 + O2</text>
        <dbReference type="Rhea" id="RHEA:20696"/>
        <dbReference type="ChEBI" id="CHEBI:15378"/>
        <dbReference type="ChEBI" id="CHEBI:15379"/>
        <dbReference type="ChEBI" id="CHEBI:16240"/>
        <dbReference type="ChEBI" id="CHEBI:18421"/>
        <dbReference type="EC" id="1.15.1.1"/>
    </reaction>
</comment>
<comment type="cofactor">
    <cofactor evidence="2">
        <name>Cu cation</name>
        <dbReference type="ChEBI" id="CHEBI:23378"/>
    </cofactor>
    <text evidence="2">Binds 1 copper ion per subunit.</text>
</comment>
<comment type="cofactor">
    <cofactor evidence="2">
        <name>Zn(2+)</name>
        <dbReference type="ChEBI" id="CHEBI:29105"/>
    </cofactor>
    <text evidence="2">Binds 1 zinc ion per subunit.</text>
</comment>
<comment type="subunit">
    <text evidence="3">Homodimer.</text>
</comment>
<comment type="subcellular location">
    <subcellularLocation>
        <location evidence="2">Cytoplasm</location>
    </subcellularLocation>
</comment>
<comment type="similarity">
    <text evidence="4">Belongs to the Cu-Zn superoxide dismutase family.</text>
</comment>
<sequence>KAVAVLRGDSNVSGVVRFEQTHESEPTKIFIGQNSILALTVVVHAGTDDYGK</sequence>
<reference key="1">
    <citation type="submission" date="2000-12" db="UniProtKB">
        <title>Presence of two active forms of cytosolic Cu-Zn superoxide dismutase enzyme in the marine yeast Debaryomyces hansenii.</title>
        <authorList>
            <person name="Hernandez-Saavedra N.Y."/>
        </authorList>
    </citation>
    <scope>PROTEIN SEQUENCE</scope>
    <source>
        <strain>CIBNOR C-11</strain>
    </source>
</reference>
<dbReference type="EC" id="1.15.1.1" evidence="3"/>
<dbReference type="SMR" id="P82902"/>
<dbReference type="GO" id="GO:0005737">
    <property type="term" value="C:cytoplasm"/>
    <property type="evidence" value="ECO:0007669"/>
    <property type="project" value="UniProtKB-SubCell"/>
</dbReference>
<dbReference type="GO" id="GO:0046872">
    <property type="term" value="F:metal ion binding"/>
    <property type="evidence" value="ECO:0007669"/>
    <property type="project" value="UniProtKB-KW"/>
</dbReference>
<dbReference type="GO" id="GO:0004784">
    <property type="term" value="F:superoxide dismutase activity"/>
    <property type="evidence" value="ECO:0007669"/>
    <property type="project" value="UniProtKB-EC"/>
</dbReference>
<dbReference type="InterPro" id="IPR036423">
    <property type="entry name" value="SOD-like_Cu/Zn_dom_sf"/>
</dbReference>
<dbReference type="SUPFAM" id="SSF49329">
    <property type="entry name" value="Cu,Zn superoxide dismutase-like"/>
    <property type="match status" value="1"/>
</dbReference>
<protein>
    <recommendedName>
        <fullName>Superoxide dismutase [Cu-Zn] 2</fullName>
        <ecNumber evidence="3">1.15.1.1</ecNumber>
    </recommendedName>
</protein>